<sequence length="433" mass="49137">MATLFHLIDVHGNEYQNVQDHSLQMALEELNQQIEVIQRQEEQLALRKKAIEDARQEVLQQIQHRKFRQYLHEREQEARLQEYYLEQLQERRAFENVVRTIIRKRFEDEERERAHRREKAARKLLRRILVSDSPNMQLVVPNNFQQMFIHHPVVDTIYSPEESSESQAEVADQQTGPYSTSEYAGAQQSQPFRIFIQNDNAPEQQSGPDVAELNTLPNRSKTSSQASVSDEELSRTELAELNDYLLAAQRRSNKRGNARKHIDLTARESPSTSFAQMSKGALNPDPEVIEPEDEPTTFRNPLEALLSTGQYSVVSSDEDVESVRDPDDGTLPIHSTQTVEEPIDTKAGEKLTDSSKQPSPPVAEHFSNETFSASPKGAETDVKSEGSNNHEQGSFNEPKSNVDSNDSASPKRPSSQASLRHNVTVEEVPDEDA</sequence>
<proteinExistence type="evidence at protein level"/>
<keyword id="KW-0597">Phosphoprotein</keyword>
<keyword id="KW-1185">Reference proteome</keyword>
<evidence type="ECO:0000256" key="1">
    <source>
        <dbReference type="SAM" id="MobiDB-lite"/>
    </source>
</evidence>
<evidence type="ECO:0000269" key="2">
    <source>
    </source>
</evidence>
<evidence type="ECO:0000305" key="3"/>
<protein>
    <recommendedName>
        <fullName>Protein slt1</fullName>
    </recommendedName>
</protein>
<dbReference type="EMBL" id="X86009">
    <property type="protein sequence ID" value="CAA59996.1"/>
    <property type="status" value="ALT_FRAME"/>
    <property type="molecule type" value="mRNA"/>
</dbReference>
<dbReference type="EMBL" id="CU329670">
    <property type="protein sequence ID" value="CAB16224.1"/>
    <property type="molecule type" value="Genomic_DNA"/>
</dbReference>
<dbReference type="PIR" id="S52837">
    <property type="entry name" value="S52837"/>
</dbReference>
<dbReference type="PIR" id="T37845">
    <property type="entry name" value="T37845"/>
</dbReference>
<dbReference type="RefSeq" id="NP_594260.1">
    <property type="nucleotide sequence ID" value="NM_001019683.2"/>
</dbReference>
<dbReference type="SMR" id="O13791"/>
<dbReference type="BioGRID" id="278905">
    <property type="interactions" value="31"/>
</dbReference>
<dbReference type="FunCoup" id="O13791">
    <property type="interactions" value="72"/>
</dbReference>
<dbReference type="IntAct" id="O13791">
    <property type="interactions" value="1"/>
</dbReference>
<dbReference type="STRING" id="284812.O13791"/>
<dbReference type="iPTMnet" id="O13791"/>
<dbReference type="PaxDb" id="4896-SPAC17G6.13.1"/>
<dbReference type="EnsemblFungi" id="SPAC17G6.13.1">
    <property type="protein sequence ID" value="SPAC17G6.13.1:pep"/>
    <property type="gene ID" value="SPAC17G6.13"/>
</dbReference>
<dbReference type="GeneID" id="2542443"/>
<dbReference type="KEGG" id="spo:2542443"/>
<dbReference type="PomBase" id="SPAC17G6.13">
    <property type="gene designation" value="slt1"/>
</dbReference>
<dbReference type="VEuPathDB" id="FungiDB:SPAC17G6.13"/>
<dbReference type="HOGENOM" id="CLU_721911_0_0_1"/>
<dbReference type="InParanoid" id="O13791"/>
<dbReference type="OMA" id="VQDHSLQ"/>
<dbReference type="PRO" id="PR:O13791"/>
<dbReference type="Proteomes" id="UP000002485">
    <property type="component" value="Chromosome I"/>
</dbReference>
<dbReference type="GO" id="GO:0005829">
    <property type="term" value="C:cytosol"/>
    <property type="evidence" value="ECO:0007005"/>
    <property type="project" value="PomBase"/>
</dbReference>
<reference key="1">
    <citation type="submission" date="1995-03" db="EMBL/GenBank/DDBJ databases">
        <authorList>
            <person name="Yuste-Rojas M."/>
            <person name="Nombela C."/>
            <person name="Sanchez M."/>
        </authorList>
    </citation>
    <scope>NUCLEOTIDE SEQUENCE [MRNA]</scope>
</reference>
<reference key="2">
    <citation type="journal article" date="2002" name="Nature">
        <title>The genome sequence of Schizosaccharomyces pombe.</title>
        <authorList>
            <person name="Wood V."/>
            <person name="Gwilliam R."/>
            <person name="Rajandream M.A."/>
            <person name="Lyne M.H."/>
            <person name="Lyne R."/>
            <person name="Stewart A."/>
            <person name="Sgouros J.G."/>
            <person name="Peat N."/>
            <person name="Hayles J."/>
            <person name="Baker S.G."/>
            <person name="Basham D."/>
            <person name="Bowman S."/>
            <person name="Brooks K."/>
            <person name="Brown D."/>
            <person name="Brown S."/>
            <person name="Chillingworth T."/>
            <person name="Churcher C.M."/>
            <person name="Collins M."/>
            <person name="Connor R."/>
            <person name="Cronin A."/>
            <person name="Davis P."/>
            <person name="Feltwell T."/>
            <person name="Fraser A."/>
            <person name="Gentles S."/>
            <person name="Goble A."/>
            <person name="Hamlin N."/>
            <person name="Harris D.E."/>
            <person name="Hidalgo J."/>
            <person name="Hodgson G."/>
            <person name="Holroyd S."/>
            <person name="Hornsby T."/>
            <person name="Howarth S."/>
            <person name="Huckle E.J."/>
            <person name="Hunt S."/>
            <person name="Jagels K."/>
            <person name="James K.D."/>
            <person name="Jones L."/>
            <person name="Jones M."/>
            <person name="Leather S."/>
            <person name="McDonald S."/>
            <person name="McLean J."/>
            <person name="Mooney P."/>
            <person name="Moule S."/>
            <person name="Mungall K.L."/>
            <person name="Murphy L.D."/>
            <person name="Niblett D."/>
            <person name="Odell C."/>
            <person name="Oliver K."/>
            <person name="O'Neil S."/>
            <person name="Pearson D."/>
            <person name="Quail M.A."/>
            <person name="Rabbinowitsch E."/>
            <person name="Rutherford K.M."/>
            <person name="Rutter S."/>
            <person name="Saunders D."/>
            <person name="Seeger K."/>
            <person name="Sharp S."/>
            <person name="Skelton J."/>
            <person name="Simmonds M.N."/>
            <person name="Squares R."/>
            <person name="Squares S."/>
            <person name="Stevens K."/>
            <person name="Taylor K."/>
            <person name="Taylor R.G."/>
            <person name="Tivey A."/>
            <person name="Walsh S.V."/>
            <person name="Warren T."/>
            <person name="Whitehead S."/>
            <person name="Woodward J.R."/>
            <person name="Volckaert G."/>
            <person name="Aert R."/>
            <person name="Robben J."/>
            <person name="Grymonprez B."/>
            <person name="Weltjens I."/>
            <person name="Vanstreels E."/>
            <person name="Rieger M."/>
            <person name="Schaefer M."/>
            <person name="Mueller-Auer S."/>
            <person name="Gabel C."/>
            <person name="Fuchs M."/>
            <person name="Duesterhoeft A."/>
            <person name="Fritzc C."/>
            <person name="Holzer E."/>
            <person name="Moestl D."/>
            <person name="Hilbert H."/>
            <person name="Borzym K."/>
            <person name="Langer I."/>
            <person name="Beck A."/>
            <person name="Lehrach H."/>
            <person name="Reinhardt R."/>
            <person name="Pohl T.M."/>
            <person name="Eger P."/>
            <person name="Zimmermann W."/>
            <person name="Wedler H."/>
            <person name="Wambutt R."/>
            <person name="Purnelle B."/>
            <person name="Goffeau A."/>
            <person name="Cadieu E."/>
            <person name="Dreano S."/>
            <person name="Gloux S."/>
            <person name="Lelaure V."/>
            <person name="Mottier S."/>
            <person name="Galibert F."/>
            <person name="Aves S.J."/>
            <person name="Xiang Z."/>
            <person name="Hunt C."/>
            <person name="Moore K."/>
            <person name="Hurst S.M."/>
            <person name="Lucas M."/>
            <person name="Rochet M."/>
            <person name="Gaillardin C."/>
            <person name="Tallada V.A."/>
            <person name="Garzon A."/>
            <person name="Thode G."/>
            <person name="Daga R.R."/>
            <person name="Cruzado L."/>
            <person name="Jimenez J."/>
            <person name="Sanchez M."/>
            <person name="del Rey F."/>
            <person name="Benito J."/>
            <person name="Dominguez A."/>
            <person name="Revuelta J.L."/>
            <person name="Moreno S."/>
            <person name="Armstrong J."/>
            <person name="Forsburg S.L."/>
            <person name="Cerutti L."/>
            <person name="Lowe T."/>
            <person name="McCombie W.R."/>
            <person name="Paulsen I."/>
            <person name="Potashkin J."/>
            <person name="Shpakovski G.V."/>
            <person name="Ussery D."/>
            <person name="Barrell B.G."/>
            <person name="Nurse P."/>
        </authorList>
    </citation>
    <scope>NUCLEOTIDE SEQUENCE [LARGE SCALE GENOMIC DNA]</scope>
    <source>
        <strain>972 / ATCC 24843</strain>
    </source>
</reference>
<reference key="3">
    <citation type="journal article" date="2008" name="J. Proteome Res.">
        <title>Phosphoproteome analysis of fission yeast.</title>
        <authorList>
            <person name="Wilson-Grady J.T."/>
            <person name="Villen J."/>
            <person name="Gygi S.P."/>
        </authorList>
    </citation>
    <scope>PHOSPHORYLATION [LARGE SCALE ANALYSIS] AT SER-227; SER-229; SER-269; SER-409; SER-415 AND SER-418</scope>
    <scope>IDENTIFICATION BY MASS SPECTROMETRY</scope>
</reference>
<accession>O13791</accession>
<accession>Q10456</accession>
<organism>
    <name type="scientific">Schizosaccharomyces pombe (strain 972 / ATCC 24843)</name>
    <name type="common">Fission yeast</name>
    <dbReference type="NCBI Taxonomy" id="284812"/>
    <lineage>
        <taxon>Eukaryota</taxon>
        <taxon>Fungi</taxon>
        <taxon>Dikarya</taxon>
        <taxon>Ascomycota</taxon>
        <taxon>Taphrinomycotina</taxon>
        <taxon>Schizosaccharomycetes</taxon>
        <taxon>Schizosaccharomycetales</taxon>
        <taxon>Schizosaccharomycetaceae</taxon>
        <taxon>Schizosaccharomyces</taxon>
    </lineage>
</organism>
<feature type="chain" id="PRO_0000071961" description="Protein slt1">
    <location>
        <begin position="1"/>
        <end position="433"/>
    </location>
</feature>
<feature type="region of interest" description="Disordered" evidence="1">
    <location>
        <begin position="159"/>
        <end position="184"/>
    </location>
</feature>
<feature type="region of interest" description="Disordered" evidence="1">
    <location>
        <begin position="200"/>
        <end position="234"/>
    </location>
</feature>
<feature type="region of interest" description="Disordered" evidence="1">
    <location>
        <begin position="252"/>
        <end position="433"/>
    </location>
</feature>
<feature type="compositionally biased region" description="Polar residues" evidence="1">
    <location>
        <begin position="172"/>
        <end position="184"/>
    </location>
</feature>
<feature type="compositionally biased region" description="Polar residues" evidence="1">
    <location>
        <begin position="215"/>
        <end position="228"/>
    </location>
</feature>
<feature type="compositionally biased region" description="Basic and acidic residues" evidence="1">
    <location>
        <begin position="343"/>
        <end position="353"/>
    </location>
</feature>
<feature type="compositionally biased region" description="Polar residues" evidence="1">
    <location>
        <begin position="385"/>
        <end position="421"/>
    </location>
</feature>
<feature type="modified residue" description="Phosphoserine" evidence="2">
    <location>
        <position position="227"/>
    </location>
</feature>
<feature type="modified residue" description="Phosphoserine" evidence="2">
    <location>
        <position position="229"/>
    </location>
</feature>
<feature type="modified residue" description="Phosphoserine" evidence="2">
    <location>
        <position position="269"/>
    </location>
</feature>
<feature type="modified residue" description="Phosphoserine" evidence="2">
    <location>
        <position position="409"/>
    </location>
</feature>
<feature type="modified residue" description="Phosphoserine" evidence="2">
    <location>
        <position position="415"/>
    </location>
</feature>
<feature type="modified residue" description="Phosphoserine" evidence="2">
    <location>
        <position position="418"/>
    </location>
</feature>
<feature type="sequence conflict" description="In Ref. 1; CAA59996." evidence="3" ref="1">
    <original>P</original>
    <variation>F</variation>
    <location>
        <position position="326"/>
    </location>
</feature>
<feature type="sequence conflict" description="In Ref. 1; CAA59996." evidence="3" ref="1">
    <original>A</original>
    <variation>V</variation>
    <location>
        <position position="378"/>
    </location>
</feature>
<name>SLT1_SCHPO</name>
<comment type="sequence caution" evidence="3">
    <conflict type="frameshift">
        <sequence resource="EMBL-CDS" id="CAA59996"/>
    </conflict>
</comment>
<gene>
    <name type="primary">slt1</name>
    <name type="ORF">SPAC17G6.13</name>
</gene>